<proteinExistence type="inferred from homology"/>
<keyword id="KW-0029">Amino-acid transport</keyword>
<keyword id="KW-0997">Cell inner membrane</keyword>
<keyword id="KW-1003">Cell membrane</keyword>
<keyword id="KW-0472">Membrane</keyword>
<keyword id="KW-0769">Symport</keyword>
<keyword id="KW-0812">Transmembrane</keyword>
<keyword id="KW-1133">Transmembrane helix</keyword>
<keyword id="KW-0813">Transport</keyword>
<feature type="chain" id="PRO_1000197549" description="Serine/threonine transporter SstT">
    <location>
        <begin position="1"/>
        <end position="404"/>
    </location>
</feature>
<feature type="transmembrane region" description="Helical" evidence="1">
    <location>
        <begin position="12"/>
        <end position="32"/>
    </location>
</feature>
<feature type="transmembrane region" description="Helical" evidence="1">
    <location>
        <begin position="53"/>
        <end position="73"/>
    </location>
</feature>
<feature type="transmembrane region" description="Helical" evidence="1">
    <location>
        <begin position="81"/>
        <end position="101"/>
    </location>
</feature>
<feature type="transmembrane region" description="Helical" evidence="1">
    <location>
        <begin position="140"/>
        <end position="160"/>
    </location>
</feature>
<feature type="transmembrane region" description="Helical" evidence="1">
    <location>
        <begin position="177"/>
        <end position="197"/>
    </location>
</feature>
<feature type="transmembrane region" description="Helical" evidence="1">
    <location>
        <begin position="216"/>
        <end position="236"/>
    </location>
</feature>
<feature type="transmembrane region" description="Helical" evidence="1">
    <location>
        <begin position="287"/>
        <end position="307"/>
    </location>
</feature>
<feature type="transmembrane region" description="Helical" evidence="1">
    <location>
        <begin position="329"/>
        <end position="349"/>
    </location>
</feature>
<feature type="transmembrane region" description="Helical" evidence="1">
    <location>
        <begin position="356"/>
        <end position="376"/>
    </location>
</feature>
<gene>
    <name evidence="1" type="primary">sstT</name>
    <name type="ordered locus">APJL_0769</name>
</gene>
<evidence type="ECO:0000255" key="1">
    <source>
        <dbReference type="HAMAP-Rule" id="MF_01582"/>
    </source>
</evidence>
<reference key="1">
    <citation type="journal article" date="2008" name="PLoS ONE">
        <title>Genome biology of Actinobacillus pleuropneumoniae JL03, an isolate of serotype 3 prevalent in China.</title>
        <authorList>
            <person name="Xu Z."/>
            <person name="Zhou Y."/>
            <person name="Li L."/>
            <person name="Zhou R."/>
            <person name="Xiao S."/>
            <person name="Wan Y."/>
            <person name="Zhang S."/>
            <person name="Wang K."/>
            <person name="Li W."/>
            <person name="Li L."/>
            <person name="Jin H."/>
            <person name="Kang M."/>
            <person name="Dalai B."/>
            <person name="Li T."/>
            <person name="Liu L."/>
            <person name="Cheng Y."/>
            <person name="Zhang L."/>
            <person name="Xu T."/>
            <person name="Zheng H."/>
            <person name="Pu S."/>
            <person name="Wang B."/>
            <person name="Gu W."/>
            <person name="Zhang X.L."/>
            <person name="Zhu G.-F."/>
            <person name="Wang S."/>
            <person name="Zhao G.-P."/>
            <person name="Chen H."/>
        </authorList>
    </citation>
    <scope>NUCLEOTIDE SEQUENCE [LARGE SCALE GENOMIC DNA]</scope>
    <source>
        <strain>JL03</strain>
    </source>
</reference>
<organism>
    <name type="scientific">Actinobacillus pleuropneumoniae serotype 3 (strain JL03)</name>
    <dbReference type="NCBI Taxonomy" id="434271"/>
    <lineage>
        <taxon>Bacteria</taxon>
        <taxon>Pseudomonadati</taxon>
        <taxon>Pseudomonadota</taxon>
        <taxon>Gammaproteobacteria</taxon>
        <taxon>Pasteurellales</taxon>
        <taxon>Pasteurellaceae</taxon>
        <taxon>Actinobacillus</taxon>
    </lineage>
</organism>
<sequence length="404" mass="41870">MSNPSLSSKLLGGNLVLRIAIGLVLGACLALVNPDWAKNVGVLGQFFVKSLRAIAPILVFVLVLSAIANKEVGSDSKLKPILVMYVLGTFVAALTAVVLSFMFPTTLELVSNPDNLNPPQGIGEIIKTVVFNLVDNPLQALANANFIGILAWAIGLGIALRHAAPSTKTFLNDFAEAVSFVVKVVIAFAPIGVFGLVAETIATNGADAFVGYARLLGVLLGAMVIVAFVLNPLIVFWKIRRNPYPLTLTCLRESGVTAFFTRSSAANIPVNMNLAKRLGVRDEIASVAIPLGATINMAGAAITVTVLTLAAAYTQGIQPDFATALLLSIVASVCACGASGVAGGSLLLIPLACSLFNIPNDIAAQVIGVGFIIGVIQDSAETALNSSTDVLFTAAVSQAEDQKA</sequence>
<name>SSTT_ACTPJ</name>
<protein>
    <recommendedName>
        <fullName evidence="1">Serine/threonine transporter SstT</fullName>
    </recommendedName>
    <alternativeName>
        <fullName evidence="1">Na(+)/serine-threonine symporter</fullName>
    </alternativeName>
</protein>
<accession>B0BP47</accession>
<dbReference type="EMBL" id="CP000687">
    <property type="protein sequence ID" value="ABY69332.1"/>
    <property type="molecule type" value="Genomic_DNA"/>
</dbReference>
<dbReference type="RefSeq" id="WP_005597199.1">
    <property type="nucleotide sequence ID" value="NC_010278.1"/>
</dbReference>
<dbReference type="SMR" id="B0BP47"/>
<dbReference type="GeneID" id="48598950"/>
<dbReference type="KEGG" id="apj:APJL_0769"/>
<dbReference type="HOGENOM" id="CLU_044581_0_0_6"/>
<dbReference type="Proteomes" id="UP000008547">
    <property type="component" value="Chromosome"/>
</dbReference>
<dbReference type="GO" id="GO:0005886">
    <property type="term" value="C:plasma membrane"/>
    <property type="evidence" value="ECO:0007669"/>
    <property type="project" value="UniProtKB-SubCell"/>
</dbReference>
<dbReference type="GO" id="GO:0005295">
    <property type="term" value="F:neutral L-amino acid:sodium symporter activity"/>
    <property type="evidence" value="ECO:0007669"/>
    <property type="project" value="TreeGrafter"/>
</dbReference>
<dbReference type="GO" id="GO:0032329">
    <property type="term" value="P:serine transport"/>
    <property type="evidence" value="ECO:0007669"/>
    <property type="project" value="InterPro"/>
</dbReference>
<dbReference type="GO" id="GO:0015826">
    <property type="term" value="P:threonine transport"/>
    <property type="evidence" value="ECO:0007669"/>
    <property type="project" value="InterPro"/>
</dbReference>
<dbReference type="FunFam" id="1.10.3860.10:FF:000003">
    <property type="entry name" value="Serine/threonine transporter sstT"/>
    <property type="match status" value="1"/>
</dbReference>
<dbReference type="Gene3D" id="1.10.3860.10">
    <property type="entry name" value="Sodium:dicarboxylate symporter"/>
    <property type="match status" value="1"/>
</dbReference>
<dbReference type="HAMAP" id="MF_01582">
    <property type="entry name" value="Ser_Thr_transp_SstT"/>
    <property type="match status" value="1"/>
</dbReference>
<dbReference type="InterPro" id="IPR001991">
    <property type="entry name" value="Na-dicarboxylate_symporter"/>
</dbReference>
<dbReference type="InterPro" id="IPR036458">
    <property type="entry name" value="Na:dicarbo_symporter_sf"/>
</dbReference>
<dbReference type="InterPro" id="IPR023025">
    <property type="entry name" value="Ser_Thr_transp_SstT"/>
</dbReference>
<dbReference type="NCBIfam" id="NF010151">
    <property type="entry name" value="PRK13628.1"/>
    <property type="match status" value="1"/>
</dbReference>
<dbReference type="PANTHER" id="PTHR42865">
    <property type="entry name" value="PROTON/GLUTAMATE-ASPARTATE SYMPORTER"/>
    <property type="match status" value="1"/>
</dbReference>
<dbReference type="PANTHER" id="PTHR42865:SF8">
    <property type="entry name" value="SERINE_THREONINE TRANSPORTER SSTT"/>
    <property type="match status" value="1"/>
</dbReference>
<dbReference type="Pfam" id="PF00375">
    <property type="entry name" value="SDF"/>
    <property type="match status" value="1"/>
</dbReference>
<dbReference type="PRINTS" id="PR00173">
    <property type="entry name" value="EDTRNSPORT"/>
</dbReference>
<dbReference type="SUPFAM" id="SSF118215">
    <property type="entry name" value="Proton glutamate symport protein"/>
    <property type="match status" value="1"/>
</dbReference>
<comment type="function">
    <text evidence="1">Involved in the import of serine and threonine into the cell, with the concomitant import of sodium (symport system).</text>
</comment>
<comment type="catalytic activity">
    <reaction evidence="1">
        <text>L-serine(in) + Na(+)(in) = L-serine(out) + Na(+)(out)</text>
        <dbReference type="Rhea" id="RHEA:29575"/>
        <dbReference type="ChEBI" id="CHEBI:29101"/>
        <dbReference type="ChEBI" id="CHEBI:33384"/>
    </reaction>
    <physiologicalReaction direction="right-to-left" evidence="1">
        <dbReference type="Rhea" id="RHEA:29577"/>
    </physiologicalReaction>
</comment>
<comment type="catalytic activity">
    <reaction evidence="1">
        <text>L-threonine(in) + Na(+)(in) = L-threonine(out) + Na(+)(out)</text>
        <dbReference type="Rhea" id="RHEA:69999"/>
        <dbReference type="ChEBI" id="CHEBI:29101"/>
        <dbReference type="ChEBI" id="CHEBI:57926"/>
    </reaction>
    <physiologicalReaction direction="right-to-left" evidence="1">
        <dbReference type="Rhea" id="RHEA:70001"/>
    </physiologicalReaction>
</comment>
<comment type="subcellular location">
    <subcellularLocation>
        <location evidence="1">Cell inner membrane</location>
        <topology evidence="1">Multi-pass membrane protein</topology>
    </subcellularLocation>
</comment>
<comment type="similarity">
    <text evidence="1">Belongs to the dicarboxylate/amino acid:cation symporter (DAACS) (TC 2.A.23) family.</text>
</comment>